<name>DBP6_PICGU</name>
<organism>
    <name type="scientific">Meyerozyma guilliermondii (strain ATCC 6260 / CBS 566 / DSM 6381 / JCM 1539 / NBRC 10279 / NRRL Y-324)</name>
    <name type="common">Yeast</name>
    <name type="synonym">Candida guilliermondii</name>
    <dbReference type="NCBI Taxonomy" id="294746"/>
    <lineage>
        <taxon>Eukaryota</taxon>
        <taxon>Fungi</taxon>
        <taxon>Dikarya</taxon>
        <taxon>Ascomycota</taxon>
        <taxon>Saccharomycotina</taxon>
        <taxon>Pichiomycetes</taxon>
        <taxon>Debaryomycetaceae</taxon>
        <taxon>Meyerozyma</taxon>
    </lineage>
</organism>
<protein>
    <recommendedName>
        <fullName>ATP-dependent RNA helicase DBP6</fullName>
        <ecNumber>3.6.4.13</ecNumber>
    </recommendedName>
</protein>
<comment type="function">
    <text evidence="1">ATP-binding RNA helicase involved in the biogenesis of 60S ribosomal subunits and is required for the normal formation of 25S and 5.8S rRNAs.</text>
</comment>
<comment type="catalytic activity">
    <reaction>
        <text>ATP + H2O = ADP + phosphate + H(+)</text>
        <dbReference type="Rhea" id="RHEA:13065"/>
        <dbReference type="ChEBI" id="CHEBI:15377"/>
        <dbReference type="ChEBI" id="CHEBI:15378"/>
        <dbReference type="ChEBI" id="CHEBI:30616"/>
        <dbReference type="ChEBI" id="CHEBI:43474"/>
        <dbReference type="ChEBI" id="CHEBI:456216"/>
        <dbReference type="EC" id="3.6.4.13"/>
    </reaction>
</comment>
<comment type="subunit">
    <text evidence="1">Associated with pre-ribosomal particles.</text>
</comment>
<comment type="subcellular location">
    <subcellularLocation>
        <location evidence="1">Nucleus</location>
        <location evidence="1">Nucleolus</location>
    </subcellularLocation>
</comment>
<comment type="domain">
    <text>The Q motif is unique to and characteristic of the DEAD box family of RNA helicases and controls ATP binding and hydrolysis.</text>
</comment>
<comment type="similarity">
    <text evidence="5">Belongs to the DEAD box helicase family. DDX51/DBP6 subfamily.</text>
</comment>
<feature type="chain" id="PRO_0000294661" description="ATP-dependent RNA helicase DBP6">
    <location>
        <begin position="1"/>
        <end position="631"/>
    </location>
</feature>
<feature type="domain" description="Helicase ATP-binding" evidence="2">
    <location>
        <begin position="233"/>
        <end position="416"/>
    </location>
</feature>
<feature type="domain" description="Helicase C-terminal" evidence="3">
    <location>
        <begin position="459"/>
        <end position="608"/>
    </location>
</feature>
<feature type="region of interest" description="Disordered" evidence="4">
    <location>
        <begin position="1"/>
        <end position="161"/>
    </location>
</feature>
<feature type="short sequence motif" description="Q motif">
    <location>
        <begin position="191"/>
        <end position="219"/>
    </location>
</feature>
<feature type="short sequence motif" description="DEAD box">
    <location>
        <begin position="352"/>
        <end position="355"/>
    </location>
</feature>
<feature type="compositionally biased region" description="Basic and acidic residues" evidence="4">
    <location>
        <begin position="13"/>
        <end position="23"/>
    </location>
</feature>
<feature type="compositionally biased region" description="Acidic residues" evidence="4">
    <location>
        <begin position="24"/>
        <end position="41"/>
    </location>
</feature>
<feature type="compositionally biased region" description="Basic and acidic residues" evidence="4">
    <location>
        <begin position="42"/>
        <end position="56"/>
    </location>
</feature>
<feature type="compositionally biased region" description="Low complexity" evidence="4">
    <location>
        <begin position="80"/>
        <end position="93"/>
    </location>
</feature>
<feature type="compositionally biased region" description="Basic and acidic residues" evidence="4">
    <location>
        <begin position="94"/>
        <end position="104"/>
    </location>
</feature>
<feature type="binding site" evidence="2">
    <location>
        <begin position="246"/>
        <end position="253"/>
    </location>
    <ligand>
        <name>ATP</name>
        <dbReference type="ChEBI" id="CHEBI:30616"/>
    </ligand>
</feature>
<evidence type="ECO:0000250" key="1"/>
<evidence type="ECO:0000255" key="2">
    <source>
        <dbReference type="PROSITE-ProRule" id="PRU00541"/>
    </source>
</evidence>
<evidence type="ECO:0000255" key="3">
    <source>
        <dbReference type="PROSITE-ProRule" id="PRU00542"/>
    </source>
</evidence>
<evidence type="ECO:0000256" key="4">
    <source>
        <dbReference type="SAM" id="MobiDB-lite"/>
    </source>
</evidence>
<evidence type="ECO:0000305" key="5"/>
<dbReference type="EC" id="3.6.4.13"/>
<dbReference type="EMBL" id="CH408158">
    <property type="protein sequence ID" value="EDK39550.2"/>
    <property type="molecule type" value="Genomic_DNA"/>
</dbReference>
<dbReference type="RefSeq" id="XP_001484267.1">
    <property type="nucleotide sequence ID" value="XM_001484217.1"/>
</dbReference>
<dbReference type="SMR" id="A5DK47"/>
<dbReference type="FunCoup" id="A5DK47">
    <property type="interactions" value="865"/>
</dbReference>
<dbReference type="STRING" id="294746.A5DK47"/>
<dbReference type="GeneID" id="5125872"/>
<dbReference type="KEGG" id="pgu:PGUG_03648"/>
<dbReference type="eggNOG" id="KOG0350">
    <property type="taxonomic scope" value="Eukaryota"/>
</dbReference>
<dbReference type="HOGENOM" id="CLU_003041_15_2_1"/>
<dbReference type="InParanoid" id="A5DK47"/>
<dbReference type="OMA" id="HLEWLVI"/>
<dbReference type="OrthoDB" id="3370at2759"/>
<dbReference type="Proteomes" id="UP000001997">
    <property type="component" value="Unassembled WGS sequence"/>
</dbReference>
<dbReference type="GO" id="GO:0005730">
    <property type="term" value="C:nucleolus"/>
    <property type="evidence" value="ECO:0007669"/>
    <property type="project" value="UniProtKB-SubCell"/>
</dbReference>
<dbReference type="GO" id="GO:0030687">
    <property type="term" value="C:preribosome, large subunit precursor"/>
    <property type="evidence" value="ECO:0007669"/>
    <property type="project" value="EnsemblFungi"/>
</dbReference>
<dbReference type="GO" id="GO:0005524">
    <property type="term" value="F:ATP binding"/>
    <property type="evidence" value="ECO:0007669"/>
    <property type="project" value="UniProtKB-KW"/>
</dbReference>
<dbReference type="GO" id="GO:0016887">
    <property type="term" value="F:ATP hydrolysis activity"/>
    <property type="evidence" value="ECO:0007669"/>
    <property type="project" value="RHEA"/>
</dbReference>
<dbReference type="GO" id="GO:0003723">
    <property type="term" value="F:RNA binding"/>
    <property type="evidence" value="ECO:0007669"/>
    <property type="project" value="UniProtKB-KW"/>
</dbReference>
<dbReference type="GO" id="GO:0003724">
    <property type="term" value="F:RNA helicase activity"/>
    <property type="evidence" value="ECO:0007669"/>
    <property type="project" value="UniProtKB-EC"/>
</dbReference>
<dbReference type="GO" id="GO:0000466">
    <property type="term" value="P:maturation of 5.8S rRNA from tricistronic rRNA transcript (SSU-rRNA, 5.8S rRNA, LSU-rRNA)"/>
    <property type="evidence" value="ECO:0007669"/>
    <property type="project" value="EnsemblFungi"/>
</dbReference>
<dbReference type="GO" id="GO:0000463">
    <property type="term" value="P:maturation of LSU-rRNA from tricistronic rRNA transcript (SSU-rRNA, 5.8S rRNA, LSU-rRNA)"/>
    <property type="evidence" value="ECO:0007669"/>
    <property type="project" value="EnsemblFungi"/>
</dbReference>
<dbReference type="CDD" id="cd17956">
    <property type="entry name" value="DEADc_DDX51"/>
    <property type="match status" value="1"/>
</dbReference>
<dbReference type="CDD" id="cd18787">
    <property type="entry name" value="SF2_C_DEAD"/>
    <property type="match status" value="1"/>
</dbReference>
<dbReference type="Gene3D" id="3.40.50.300">
    <property type="entry name" value="P-loop containing nucleotide triphosphate hydrolases"/>
    <property type="match status" value="2"/>
</dbReference>
<dbReference type="InterPro" id="IPR011545">
    <property type="entry name" value="DEAD/DEAH_box_helicase_dom"/>
</dbReference>
<dbReference type="InterPro" id="IPR014001">
    <property type="entry name" value="Helicase_ATP-bd"/>
</dbReference>
<dbReference type="InterPro" id="IPR001650">
    <property type="entry name" value="Helicase_C-like"/>
</dbReference>
<dbReference type="InterPro" id="IPR027417">
    <property type="entry name" value="P-loop_NTPase"/>
</dbReference>
<dbReference type="InterPro" id="IPR000629">
    <property type="entry name" value="RNA-helicase_DEAD-box_CS"/>
</dbReference>
<dbReference type="PANTHER" id="PTHR24031">
    <property type="entry name" value="RNA HELICASE"/>
    <property type="match status" value="1"/>
</dbReference>
<dbReference type="Pfam" id="PF00270">
    <property type="entry name" value="DEAD"/>
    <property type="match status" value="1"/>
</dbReference>
<dbReference type="Pfam" id="PF00271">
    <property type="entry name" value="Helicase_C"/>
    <property type="match status" value="1"/>
</dbReference>
<dbReference type="SMART" id="SM00487">
    <property type="entry name" value="DEXDc"/>
    <property type="match status" value="1"/>
</dbReference>
<dbReference type="SMART" id="SM00490">
    <property type="entry name" value="HELICc"/>
    <property type="match status" value="1"/>
</dbReference>
<dbReference type="SUPFAM" id="SSF52540">
    <property type="entry name" value="P-loop containing nucleoside triphosphate hydrolases"/>
    <property type="match status" value="1"/>
</dbReference>
<dbReference type="PROSITE" id="PS00039">
    <property type="entry name" value="DEAD_ATP_HELICASE"/>
    <property type="match status" value="1"/>
</dbReference>
<dbReference type="PROSITE" id="PS51192">
    <property type="entry name" value="HELICASE_ATP_BIND_1"/>
    <property type="match status" value="1"/>
</dbReference>
<dbReference type="PROSITE" id="PS51194">
    <property type="entry name" value="HELICASE_CTER"/>
    <property type="match status" value="1"/>
</dbReference>
<dbReference type="PROSITE" id="PS51195">
    <property type="entry name" value="Q_MOTIF"/>
    <property type="match status" value="1"/>
</dbReference>
<gene>
    <name type="primary">DBP6</name>
    <name type="ORF">PGUG_03648</name>
</gene>
<keyword id="KW-0067">ATP-binding</keyword>
<keyword id="KW-0347">Helicase</keyword>
<keyword id="KW-0378">Hydrolase</keyword>
<keyword id="KW-0547">Nucleotide-binding</keyword>
<keyword id="KW-0539">Nucleus</keyword>
<keyword id="KW-1185">Reference proteome</keyword>
<keyword id="KW-0690">Ribosome biogenesis</keyword>
<keyword id="KW-0694">RNA-binding</keyword>
<keyword id="KW-0698">rRNA processing</keyword>
<accession>A5DK47</accession>
<reference key="1">
    <citation type="journal article" date="2009" name="Nature">
        <title>Evolution of pathogenicity and sexual reproduction in eight Candida genomes.</title>
        <authorList>
            <person name="Butler G."/>
            <person name="Rasmussen M.D."/>
            <person name="Lin M.F."/>
            <person name="Santos M.A.S."/>
            <person name="Sakthikumar S."/>
            <person name="Munro C.A."/>
            <person name="Rheinbay E."/>
            <person name="Grabherr M."/>
            <person name="Forche A."/>
            <person name="Reedy J.L."/>
            <person name="Agrafioti I."/>
            <person name="Arnaud M.B."/>
            <person name="Bates S."/>
            <person name="Brown A.J.P."/>
            <person name="Brunke S."/>
            <person name="Costanzo M.C."/>
            <person name="Fitzpatrick D.A."/>
            <person name="de Groot P.W.J."/>
            <person name="Harris D."/>
            <person name="Hoyer L.L."/>
            <person name="Hube B."/>
            <person name="Klis F.M."/>
            <person name="Kodira C."/>
            <person name="Lennard N."/>
            <person name="Logue M.E."/>
            <person name="Martin R."/>
            <person name="Neiman A.M."/>
            <person name="Nikolaou E."/>
            <person name="Quail M.A."/>
            <person name="Quinn J."/>
            <person name="Santos M.C."/>
            <person name="Schmitzberger F.F."/>
            <person name="Sherlock G."/>
            <person name="Shah P."/>
            <person name="Silverstein K.A.T."/>
            <person name="Skrzypek M.S."/>
            <person name="Soll D."/>
            <person name="Staggs R."/>
            <person name="Stansfield I."/>
            <person name="Stumpf M.P.H."/>
            <person name="Sudbery P.E."/>
            <person name="Srikantha T."/>
            <person name="Zeng Q."/>
            <person name="Berman J."/>
            <person name="Berriman M."/>
            <person name="Heitman J."/>
            <person name="Gow N.A.R."/>
            <person name="Lorenz M.C."/>
            <person name="Birren B.W."/>
            <person name="Kellis M."/>
            <person name="Cuomo C.A."/>
        </authorList>
    </citation>
    <scope>NUCLEOTIDE SEQUENCE [LARGE SCALE GENOMIC DNA]</scope>
    <source>
        <strain>ATCC 6260 / CBS 566 / DSM 6381 / JCM 1539 / NBRC 10279 / NRRL Y-324</strain>
    </source>
</reference>
<sequence length="631" mass="69732">MERCDGVMFAARYDPEDGKRESVSEDTESERESESGSESESESEKETESESEKETESESESETGNTGKTGETRKSIGLESVSDSDSDSGSQSRSDSDVEMKEVDASNSNIVSDSSKHKSVLKKLRTSLSAQKAENSTSNSDSDESSVPTHDLAPLPQPALPRDQRLTATTNHIGNLDWLATPIYASTTETVPFSSFGLSSSMVKNLQSNGFSSAFSVQVSVLKLLLPDMESQAIRPDIGGDLLVNAATGSGKTLGYAIPIIESLRNRIVPRVRAIVLVPTKPLISQVKATFAMLSKNTNLSVVSLRSDISINDEAQRLQVVPDIIVSTPGRLVEHLTNGHINLKSLRYLVIDEADRLLNQSFQNWCETLMSRIDSNPISELDQTWRPSVQKLVFSATLTTDAGRLSMLKLQRPRLIIVNDRHELVNELFTVPATLQEYKLSLGSARSSAKPLVLAKFLMSEQKLVNTLVFAKSNEASLRLCRLLQLLFRVFGLDVTVSYLNSTNNAASTRAKILKDFANQTVHILVVTDLIARGIDIATITNVINYDLPNSSRDYVHRVGRTARANQDGEAYTMCFGKGETKWFTQLVREVSRQTEVKDVEKGFRDLVSREDEAKYDTCLEELQRQVFEGV</sequence>
<proteinExistence type="inferred from homology"/>